<comment type="function">
    <text>Protamines substitute for histones in the chromatin of sperm during the haploid phase of spermatogenesis. They compact sperm DNA into a highly condensed, stable and inactive complex.</text>
</comment>
<comment type="subcellular location">
    <subcellularLocation>
        <location>Nucleus</location>
    </subcellularLocation>
    <subcellularLocation>
        <location>Chromosome</location>
    </subcellularLocation>
</comment>
<comment type="tissue specificity">
    <text>Testis.</text>
</comment>
<comment type="similarity">
    <text evidence="2">Belongs to the protamine P1 family.</text>
</comment>
<feature type="chain" id="PRO_0000191464" description="Sperm protamine P1">
    <location>
        <begin position="1"/>
        <end position="62"/>
    </location>
</feature>
<feature type="region of interest" description="Disordered" evidence="1">
    <location>
        <begin position="1"/>
        <end position="62"/>
    </location>
</feature>
<reference key="1">
    <citation type="journal article" date="1997" name="J. Mammal. Evol.">
        <title>Reconstructing the taxonomic radiation of dasyurine marsupials with cytochrome b, 12S rRNA, and protamine P1 gene trees.</title>
        <authorList>
            <person name="Krajewski C."/>
            <person name="Young J."/>
            <person name="Buckley L."/>
            <person name="Woolley P.A."/>
            <person name="Westerman M."/>
        </authorList>
    </citation>
    <scope>NUCLEOTIDE SEQUENCE [GENOMIC DNA]</scope>
</reference>
<dbReference type="EMBL" id="AF010276">
    <property type="protein sequence ID" value="AAB69306.1"/>
    <property type="molecule type" value="Genomic_DNA"/>
</dbReference>
<dbReference type="GO" id="GO:0000786">
    <property type="term" value="C:nucleosome"/>
    <property type="evidence" value="ECO:0007669"/>
    <property type="project" value="UniProtKB-KW"/>
</dbReference>
<dbReference type="GO" id="GO:0005634">
    <property type="term" value="C:nucleus"/>
    <property type="evidence" value="ECO:0007669"/>
    <property type="project" value="UniProtKB-SubCell"/>
</dbReference>
<dbReference type="GO" id="GO:0003677">
    <property type="term" value="F:DNA binding"/>
    <property type="evidence" value="ECO:0007669"/>
    <property type="project" value="UniProtKB-KW"/>
</dbReference>
<dbReference type="GO" id="GO:0030261">
    <property type="term" value="P:chromosome condensation"/>
    <property type="evidence" value="ECO:0007669"/>
    <property type="project" value="UniProtKB-KW"/>
</dbReference>
<dbReference type="GO" id="GO:0035092">
    <property type="term" value="P:sperm DNA condensation"/>
    <property type="evidence" value="ECO:0007669"/>
    <property type="project" value="InterPro"/>
</dbReference>
<dbReference type="InterPro" id="IPR000221">
    <property type="entry name" value="Protamine_P1"/>
</dbReference>
<dbReference type="PROSITE" id="PS00048">
    <property type="entry name" value="PROTAMINE_P1"/>
    <property type="match status" value="1"/>
</dbReference>
<protein>
    <recommendedName>
        <fullName>Sperm protamine P1</fullName>
    </recommendedName>
</protein>
<name>HSP1_DASMA</name>
<evidence type="ECO:0000256" key="1">
    <source>
        <dbReference type="SAM" id="MobiDB-lite"/>
    </source>
</evidence>
<evidence type="ECO:0000305" key="2"/>
<keyword id="KW-0158">Chromosome</keyword>
<keyword id="KW-0217">Developmental protein</keyword>
<keyword id="KW-0221">Differentiation</keyword>
<keyword id="KW-0226">DNA condensation</keyword>
<keyword id="KW-0238">DNA-binding</keyword>
<keyword id="KW-0544">Nucleosome core</keyword>
<keyword id="KW-0539">Nucleus</keyword>
<keyword id="KW-0744">Spermatogenesis</keyword>
<proteinExistence type="evidence at transcript level"/>
<accession>P62485</accession>
<accession>P42151</accession>
<organism>
    <name type="scientific">Dasyurus maculatus</name>
    <name type="common">Tiger quoll</name>
    <dbReference type="NCBI Taxonomy" id="9281"/>
    <lineage>
        <taxon>Eukaryota</taxon>
        <taxon>Metazoa</taxon>
        <taxon>Chordata</taxon>
        <taxon>Craniata</taxon>
        <taxon>Vertebrata</taxon>
        <taxon>Euteleostomi</taxon>
        <taxon>Mammalia</taxon>
        <taxon>Metatheria</taxon>
        <taxon>Dasyuromorphia</taxon>
        <taxon>Dasyuridae</taxon>
        <taxon>Dasyurus</taxon>
    </lineage>
</organism>
<sequence length="62" mass="8541">MARYRRRSRSRSRSRYRRRRRRRSRGRRRRTYRRSRRHSRRRRGRRRGYSRRRYSRRGRRRY</sequence>
<gene>
    <name type="primary">PRM1</name>
</gene>